<keyword id="KW-0010">Activator</keyword>
<keyword id="KW-0539">Nucleus</keyword>
<keyword id="KW-0597">Phosphoprotein</keyword>
<keyword id="KW-1185">Reference proteome</keyword>
<keyword id="KW-0678">Repressor</keyword>
<keyword id="KW-0804">Transcription</keyword>
<keyword id="KW-0805">Transcription regulation</keyword>
<dbReference type="EMBL" id="Y09265">
    <property type="protein sequence ID" value="CAA70460.1"/>
    <property type="molecule type" value="mRNA"/>
</dbReference>
<dbReference type="EMBL" id="U18917">
    <property type="protein sequence ID" value="AAB64686.1"/>
    <property type="molecule type" value="Genomic_DNA"/>
</dbReference>
<dbReference type="EMBL" id="AY693203">
    <property type="protein sequence ID" value="AAT93222.1"/>
    <property type="molecule type" value="Genomic_DNA"/>
</dbReference>
<dbReference type="EMBL" id="BK006939">
    <property type="protein sequence ID" value="DAA07820.1"/>
    <property type="molecule type" value="Genomic_DNA"/>
</dbReference>
<dbReference type="PIR" id="S50662">
    <property type="entry name" value="S50662"/>
</dbReference>
<dbReference type="RefSeq" id="NP_011086.3">
    <property type="nucleotide sequence ID" value="NM_001179049.3"/>
</dbReference>
<dbReference type="SMR" id="P40096"/>
<dbReference type="BioGRID" id="36910">
    <property type="interactions" value="352"/>
</dbReference>
<dbReference type="ComplexPortal" id="CPX-1662">
    <property type="entry name" value="Negative cofactor 2 transcriptional regulator complex"/>
</dbReference>
<dbReference type="DIP" id="DIP-2066N"/>
<dbReference type="FunCoup" id="P40096">
    <property type="interactions" value="86"/>
</dbReference>
<dbReference type="IntAct" id="P40096">
    <property type="interactions" value="6"/>
</dbReference>
<dbReference type="MINT" id="P40096"/>
<dbReference type="STRING" id="4932.YER159C"/>
<dbReference type="iPTMnet" id="P40096"/>
<dbReference type="PaxDb" id="4932-YER159C"/>
<dbReference type="PeptideAtlas" id="P40096"/>
<dbReference type="EnsemblFungi" id="YER159C_mRNA">
    <property type="protein sequence ID" value="YER159C"/>
    <property type="gene ID" value="YER159C"/>
</dbReference>
<dbReference type="GeneID" id="856904"/>
<dbReference type="KEGG" id="sce:YER159C"/>
<dbReference type="AGR" id="SGD:S000000961"/>
<dbReference type="SGD" id="S000000961">
    <property type="gene designation" value="BUR6"/>
</dbReference>
<dbReference type="VEuPathDB" id="FungiDB:YER159C"/>
<dbReference type="eggNOG" id="KOG1659">
    <property type="taxonomic scope" value="Eukaryota"/>
</dbReference>
<dbReference type="GeneTree" id="ENSGT00390000012424"/>
<dbReference type="HOGENOM" id="CLU_045277_9_1_1"/>
<dbReference type="InParanoid" id="P40096"/>
<dbReference type="OMA" id="IMKKTIM"/>
<dbReference type="OrthoDB" id="653904at2759"/>
<dbReference type="BioCyc" id="YEAST:G3O-30320-MONOMER"/>
<dbReference type="BioGRID-ORCS" id="856904">
    <property type="hits" value="6 hits in 10 CRISPR screens"/>
</dbReference>
<dbReference type="PRO" id="PR:P40096"/>
<dbReference type="Proteomes" id="UP000002311">
    <property type="component" value="Chromosome V"/>
</dbReference>
<dbReference type="RNAct" id="P40096">
    <property type="molecule type" value="protein"/>
</dbReference>
<dbReference type="GO" id="GO:0017054">
    <property type="term" value="C:negative cofactor 2 complex"/>
    <property type="evidence" value="ECO:0000314"/>
    <property type="project" value="SGD"/>
</dbReference>
<dbReference type="GO" id="GO:0005634">
    <property type="term" value="C:nucleus"/>
    <property type="evidence" value="ECO:0000318"/>
    <property type="project" value="GO_Central"/>
</dbReference>
<dbReference type="GO" id="GO:0003682">
    <property type="term" value="F:chromatin binding"/>
    <property type="evidence" value="ECO:0000314"/>
    <property type="project" value="SGD"/>
</dbReference>
<dbReference type="GO" id="GO:0001046">
    <property type="term" value="F:core promoter sequence-specific DNA binding"/>
    <property type="evidence" value="ECO:0000314"/>
    <property type="project" value="SGD"/>
</dbReference>
<dbReference type="GO" id="GO:0046982">
    <property type="term" value="F:protein heterodimerization activity"/>
    <property type="evidence" value="ECO:0007669"/>
    <property type="project" value="InterPro"/>
</dbReference>
<dbReference type="GO" id="GO:0016251">
    <property type="term" value="F:RNA polymerase II general transcription initiation factor activity"/>
    <property type="evidence" value="ECO:0000318"/>
    <property type="project" value="GO_Central"/>
</dbReference>
<dbReference type="GO" id="GO:0003713">
    <property type="term" value="F:transcription coactivator activity"/>
    <property type="evidence" value="ECO:0000314"/>
    <property type="project" value="SGD"/>
</dbReference>
<dbReference type="GO" id="GO:0003714">
    <property type="term" value="F:transcription corepressor activity"/>
    <property type="evidence" value="ECO:0000314"/>
    <property type="project" value="SGD"/>
</dbReference>
<dbReference type="GO" id="GO:0034605">
    <property type="term" value="P:cellular response to heat"/>
    <property type="evidence" value="ECO:0000315"/>
    <property type="project" value="SGD"/>
</dbReference>
<dbReference type="GO" id="GO:0017055">
    <property type="term" value="P:negative regulation of RNA polymerase II transcription preinitiation complex assembly"/>
    <property type="evidence" value="ECO:0000314"/>
    <property type="project" value="ComplexPortal"/>
</dbReference>
<dbReference type="GO" id="GO:0000122">
    <property type="term" value="P:negative regulation of transcription by RNA polymerase II"/>
    <property type="evidence" value="ECO:0000314"/>
    <property type="project" value="SGD"/>
</dbReference>
<dbReference type="GO" id="GO:0045944">
    <property type="term" value="P:positive regulation of transcription by RNA polymerase II"/>
    <property type="evidence" value="ECO:0000314"/>
    <property type="project" value="SGD"/>
</dbReference>
<dbReference type="GO" id="GO:0051123">
    <property type="term" value="P:RNA polymerase II preinitiation complex assembly"/>
    <property type="evidence" value="ECO:0000315"/>
    <property type="project" value="SGD"/>
</dbReference>
<dbReference type="GO" id="GO:0006366">
    <property type="term" value="P:transcription by RNA polymerase II"/>
    <property type="evidence" value="ECO:0000318"/>
    <property type="project" value="GO_Central"/>
</dbReference>
<dbReference type="CDD" id="cd22906">
    <property type="entry name" value="HFD_DRAP1"/>
    <property type="match status" value="1"/>
</dbReference>
<dbReference type="FunFam" id="1.10.20.10:FF:000036">
    <property type="entry name" value="CBF/NF-Y family transcription factor"/>
    <property type="match status" value="1"/>
</dbReference>
<dbReference type="Gene3D" id="1.10.20.10">
    <property type="entry name" value="Histone, subunit A"/>
    <property type="match status" value="1"/>
</dbReference>
<dbReference type="InterPro" id="IPR003958">
    <property type="entry name" value="CBFA_NFYB_domain"/>
</dbReference>
<dbReference type="InterPro" id="IPR009072">
    <property type="entry name" value="Histone-fold"/>
</dbReference>
<dbReference type="InterPro" id="IPR050568">
    <property type="entry name" value="Transcr_DNA_Rep_Reg"/>
</dbReference>
<dbReference type="PANTHER" id="PTHR10252:SF5">
    <property type="entry name" value="DR1-ASSOCIATED COREPRESSOR"/>
    <property type="match status" value="1"/>
</dbReference>
<dbReference type="PANTHER" id="PTHR10252">
    <property type="entry name" value="HISTONE-LIKE TRANSCRIPTION FACTOR CCAAT-RELATED"/>
    <property type="match status" value="1"/>
</dbReference>
<dbReference type="Pfam" id="PF00808">
    <property type="entry name" value="CBFD_NFYB_HMF"/>
    <property type="match status" value="1"/>
</dbReference>
<dbReference type="SUPFAM" id="SSF47113">
    <property type="entry name" value="Histone-fold"/>
    <property type="match status" value="1"/>
</dbReference>
<name>NCB1_YEAST</name>
<comment type="function">
    <text evidence="2 5 6 7">Component of the NC2 complex which represses RNA polymerase II transcription through binding to SPT15/TBP and thereby inhibiting the assembly of the preinitiation complex. The NC2 complex may also mediate transcriptional activation from TATA-driven promoters through association with SPT15/TBP.</text>
</comment>
<comment type="subunit">
    <text evidence="5 6 7">Component of the NC2 (negative cofactor 2) complex composed of BUR6 and NCB2. The NC2 complex associates with SPT15/TBP. Interacts with SPT15/TBP.</text>
</comment>
<comment type="interaction">
    <interactant intactId="EBI-11908">
        <id>P40096</id>
    </interactant>
    <interactant intactId="EBI-37723">
        <id>Q92317</id>
        <label>NCB2</label>
    </interactant>
    <organismsDiffer>false</organismsDiffer>
    <experiments>6</experiments>
</comment>
<comment type="interaction">
    <interactant intactId="EBI-11908">
        <id>P40096</id>
    </interactant>
    <interactant intactId="EBI-19129">
        <id>P13393</id>
        <label>SPT15</label>
    </interactant>
    <organismsDiffer>false</organismsDiffer>
    <experiments>2</experiments>
</comment>
<comment type="subcellular location">
    <subcellularLocation>
        <location evidence="3">Nucleus</location>
    </subcellularLocation>
</comment>
<comment type="miscellaneous">
    <text evidence="4">Present with 5130 molecules/cell in log phase SD medium.</text>
</comment>
<comment type="similarity">
    <text evidence="8">Belongs to the NC2 alpha/DRAP1 family.</text>
</comment>
<gene>
    <name type="primary">BUR6</name>
    <name type="synonym">NCB1</name>
    <name type="ordered locus">YER159C</name>
</gene>
<accession>P40096</accession>
<accession>D3DM66</accession>
<feature type="chain" id="PRO_0000096755" description="Negative cofactor 2 complex subunit alpha">
    <location>
        <begin position="1"/>
        <end position="142"/>
    </location>
</feature>
<feature type="domain" description="Histone-fold">
    <location>
        <begin position="29"/>
        <end position="137"/>
    </location>
</feature>
<feature type="region of interest" description="Disordered" evidence="1">
    <location>
        <begin position="1"/>
        <end position="43"/>
    </location>
</feature>
<feature type="compositionally biased region" description="Polar residues" evidence="1">
    <location>
        <begin position="1"/>
        <end position="11"/>
    </location>
</feature>
<feature type="modified residue" description="Phosphoserine" evidence="9">
    <location>
        <position position="27"/>
    </location>
</feature>
<feature type="modified residue" description="Phosphoserine" evidence="9">
    <location>
        <position position="141"/>
    </location>
</feature>
<protein>
    <recommendedName>
        <fullName>Negative cofactor 2 complex subunit alpha</fullName>
        <shortName>NC2 complex subunit alpha</shortName>
    </recommendedName>
    <alternativeName>
        <fullName>Transcription repressor BUR6</fullName>
    </alternativeName>
</protein>
<evidence type="ECO:0000256" key="1">
    <source>
        <dbReference type="SAM" id="MobiDB-lite"/>
    </source>
</evidence>
<evidence type="ECO:0000269" key="2">
    <source>
    </source>
</evidence>
<evidence type="ECO:0000269" key="3">
    <source>
    </source>
</evidence>
<evidence type="ECO:0000269" key="4">
    <source>
    </source>
</evidence>
<evidence type="ECO:0000269" key="5">
    <source>
    </source>
</evidence>
<evidence type="ECO:0000269" key="6">
    <source>
    </source>
</evidence>
<evidence type="ECO:0000269" key="7">
    <source>
    </source>
</evidence>
<evidence type="ECO:0000305" key="8"/>
<evidence type="ECO:0007744" key="9">
    <source>
    </source>
</evidence>
<proteinExistence type="evidence at protein level"/>
<reference key="1">
    <citation type="journal article" date="1996" name="Nucleic Acids Res.">
        <title>Characterization of the basal inhibitor of class II transcription NC2 from Saccharomyces cerevisiae.</title>
        <authorList>
            <person name="Goppelt A.R."/>
            <person name="Meisterernst M."/>
        </authorList>
    </citation>
    <scope>NUCLEOTIDE SEQUENCE [MRNA]</scope>
    <scope>FUNCTION OF THE NC2 COMPLEX</scope>
    <scope>SUBUNIT</scope>
</reference>
<reference key="2">
    <citation type="journal article" date="1997" name="Nature">
        <title>The nucleotide sequence of Saccharomyces cerevisiae chromosome V.</title>
        <authorList>
            <person name="Dietrich F.S."/>
            <person name="Mulligan J.T."/>
            <person name="Hennessy K.M."/>
            <person name="Yelton M.A."/>
            <person name="Allen E."/>
            <person name="Araujo R."/>
            <person name="Aviles E."/>
            <person name="Berno A."/>
            <person name="Brennan T."/>
            <person name="Carpenter J."/>
            <person name="Chen E."/>
            <person name="Cherry J.M."/>
            <person name="Chung E."/>
            <person name="Duncan M."/>
            <person name="Guzman E."/>
            <person name="Hartzell G."/>
            <person name="Hunicke-Smith S."/>
            <person name="Hyman R.W."/>
            <person name="Kayser A."/>
            <person name="Komp C."/>
            <person name="Lashkari D."/>
            <person name="Lew H."/>
            <person name="Lin D."/>
            <person name="Mosedale D."/>
            <person name="Nakahara K."/>
            <person name="Namath A."/>
            <person name="Norgren R."/>
            <person name="Oefner P."/>
            <person name="Oh C."/>
            <person name="Petel F.X."/>
            <person name="Roberts D."/>
            <person name="Sehl P."/>
            <person name="Schramm S."/>
            <person name="Shogren T."/>
            <person name="Smith V."/>
            <person name="Taylor P."/>
            <person name="Wei Y."/>
            <person name="Botstein D."/>
            <person name="Davis R.W."/>
        </authorList>
    </citation>
    <scope>NUCLEOTIDE SEQUENCE [LARGE SCALE GENOMIC DNA]</scope>
    <source>
        <strain>ATCC 204508 / S288c</strain>
    </source>
</reference>
<reference key="3">
    <citation type="journal article" date="2014" name="G3 (Bethesda)">
        <title>The reference genome sequence of Saccharomyces cerevisiae: Then and now.</title>
        <authorList>
            <person name="Engel S.R."/>
            <person name="Dietrich F.S."/>
            <person name="Fisk D.G."/>
            <person name="Binkley G."/>
            <person name="Balakrishnan R."/>
            <person name="Costanzo M.C."/>
            <person name="Dwight S.S."/>
            <person name="Hitz B.C."/>
            <person name="Karra K."/>
            <person name="Nash R.S."/>
            <person name="Weng S."/>
            <person name="Wong E.D."/>
            <person name="Lloyd P."/>
            <person name="Skrzypek M.S."/>
            <person name="Miyasato S.R."/>
            <person name="Simison M."/>
            <person name="Cherry J.M."/>
        </authorList>
    </citation>
    <scope>GENOME REANNOTATION</scope>
    <source>
        <strain>ATCC 204508 / S288c</strain>
    </source>
</reference>
<reference key="4">
    <citation type="journal article" date="2007" name="Genome Res.">
        <title>Approaching a complete repository of sequence-verified protein-encoding clones for Saccharomyces cerevisiae.</title>
        <authorList>
            <person name="Hu Y."/>
            <person name="Rolfs A."/>
            <person name="Bhullar B."/>
            <person name="Murthy T.V.S."/>
            <person name="Zhu C."/>
            <person name="Berger M.F."/>
            <person name="Camargo A.A."/>
            <person name="Kelley F."/>
            <person name="McCarron S."/>
            <person name="Jepson D."/>
            <person name="Richardson A."/>
            <person name="Raphael J."/>
            <person name="Moreira D."/>
            <person name="Taycher E."/>
            <person name="Zuo D."/>
            <person name="Mohr S."/>
            <person name="Kane M.F."/>
            <person name="Williamson J."/>
            <person name="Simpson A.J.G."/>
            <person name="Bulyk M.L."/>
            <person name="Harlow E."/>
            <person name="Marsischky G."/>
            <person name="Kolodner R.D."/>
            <person name="LaBaer J."/>
        </authorList>
    </citation>
    <scope>NUCLEOTIDE SEQUENCE [GENOMIC DNA]</scope>
    <source>
        <strain>ATCC 204508 / S288c</strain>
    </source>
</reference>
<reference key="5">
    <citation type="journal article" date="1997" name="Proc. Natl. Acad. Sci. U.S.A.">
        <title>The Dr1/DRAP1 heterodimer is a global repressor of transcription in vivo.</title>
        <authorList>
            <person name="Kim S."/>
            <person name="Na J.G."/>
            <person name="Hampsey M."/>
            <person name="Reinberg D."/>
        </authorList>
    </citation>
    <scope>IDENTIFICATION IN THE NC2 COMPLEX</scope>
    <scope>FUNCTION OF THE NC2 COMPLEX</scope>
</reference>
<reference key="6">
    <citation type="journal article" date="1997" name="Proc. Natl. Acad. Sci. U.S.A.">
        <title>Functional antagonism between RNA polymerase II holoenzyme and global negative regulator NC2 in vivo.</title>
        <authorList>
            <person name="Gadbois E.L."/>
            <person name="Chao D.M."/>
            <person name="Reese J.C."/>
            <person name="Green M.R."/>
            <person name="Young R.A."/>
        </authorList>
    </citation>
    <scope>FUNCTION OF THE NC2 COMPLEX</scope>
    <scope>SUBUNIT</scope>
    <scope>INTERACTION WITH SPT15</scope>
</reference>
<reference key="7">
    <citation type="journal article" date="2002" name="Proc. Natl. Acad. Sci. U.S.A.">
        <title>Direct stimulation of transcription by negative cofactor 2 (NC2) through TATA-binding protein (TBP).</title>
        <authorList>
            <person name="Cang Y."/>
            <person name="Prelich G."/>
        </authorList>
    </citation>
    <scope>FUNCTION OF THE NC2 COMPLEX IN TRANSCRIPTIONAL ACTIVATION</scope>
</reference>
<reference key="8">
    <citation type="journal article" date="2003" name="Nature">
        <title>Global analysis of protein localization in budding yeast.</title>
        <authorList>
            <person name="Huh W.-K."/>
            <person name="Falvo J.V."/>
            <person name="Gerke L.C."/>
            <person name="Carroll A.S."/>
            <person name="Howson R.W."/>
            <person name="Weissman J.S."/>
            <person name="O'Shea E.K."/>
        </authorList>
    </citation>
    <scope>SUBCELLULAR LOCATION [LARGE SCALE ANALYSIS]</scope>
</reference>
<reference key="9">
    <citation type="journal article" date="2003" name="Nature">
        <title>Global analysis of protein expression in yeast.</title>
        <authorList>
            <person name="Ghaemmaghami S."/>
            <person name="Huh W.-K."/>
            <person name="Bower K."/>
            <person name="Howson R.W."/>
            <person name="Belle A."/>
            <person name="Dephoure N."/>
            <person name="O'Shea E.K."/>
            <person name="Weissman J.S."/>
        </authorList>
    </citation>
    <scope>LEVEL OF PROTEIN EXPRESSION [LARGE SCALE ANALYSIS]</scope>
</reference>
<reference key="10">
    <citation type="journal article" date="2008" name="Mol. Cell. Proteomics">
        <title>A multidimensional chromatography technology for in-depth phosphoproteome analysis.</title>
        <authorList>
            <person name="Albuquerque C.P."/>
            <person name="Smolka M.B."/>
            <person name="Payne S.H."/>
            <person name="Bafna V."/>
            <person name="Eng J."/>
            <person name="Zhou H."/>
        </authorList>
    </citation>
    <scope>PHOSPHORYLATION [LARGE SCALE ANALYSIS] AT SER-27 AND SER-141</scope>
    <scope>IDENTIFICATION BY MASS SPECTROMETRY [LARGE SCALE ANALYSIS]</scope>
</reference>
<sequence length="142" mass="15517">MADQVPVTTQLPPIKPEHEVPLDAGGSPVGNMGTNSNNNNELGDVFDRIKTHFPPAKVKKIMQTDEDIGKVSQATPVIAGRSLEFFIALLVKKSGEMARGQGTKRITAEILKKTILNDEKFDFLREGLCVEEGQTQPEEESA</sequence>
<organism>
    <name type="scientific">Saccharomyces cerevisiae (strain ATCC 204508 / S288c)</name>
    <name type="common">Baker's yeast</name>
    <dbReference type="NCBI Taxonomy" id="559292"/>
    <lineage>
        <taxon>Eukaryota</taxon>
        <taxon>Fungi</taxon>
        <taxon>Dikarya</taxon>
        <taxon>Ascomycota</taxon>
        <taxon>Saccharomycotina</taxon>
        <taxon>Saccharomycetes</taxon>
        <taxon>Saccharomycetales</taxon>
        <taxon>Saccharomycetaceae</taxon>
        <taxon>Saccharomyces</taxon>
    </lineage>
</organism>